<sequence length="213" mass="22677">MDTLWDISPPVSPATPVWPGDTPVAVERVWRMEAGSPVNVARLTLSPHTGAHCDAPLHYDADGAPIGAVPLDTYLGPCRVIHCIGASPVVRPADVEAALDGVPPRVLLRTYARAAVEQWDSNFCAVAPDTVDLLAAHGVKLIGIDTPSLDPQESKTMDAHHRVRAHRMAILEGIVLDDVPPGDYELIALPLKFATLDASPVRAVLRALPAHAS</sequence>
<comment type="function">
    <text evidence="1">Catalyzes the hydrolysis of N-formyl-L-kynurenine to L-kynurenine, the second step in the kynurenine pathway of tryptophan degradation.</text>
</comment>
<comment type="catalytic activity">
    <reaction evidence="1">
        <text>N-formyl-L-kynurenine + H2O = L-kynurenine + formate + H(+)</text>
        <dbReference type="Rhea" id="RHEA:13009"/>
        <dbReference type="ChEBI" id="CHEBI:15377"/>
        <dbReference type="ChEBI" id="CHEBI:15378"/>
        <dbReference type="ChEBI" id="CHEBI:15740"/>
        <dbReference type="ChEBI" id="CHEBI:57959"/>
        <dbReference type="ChEBI" id="CHEBI:58629"/>
        <dbReference type="EC" id="3.5.1.9"/>
    </reaction>
</comment>
<comment type="cofactor">
    <cofactor evidence="1">
        <name>Zn(2+)</name>
        <dbReference type="ChEBI" id="CHEBI:29105"/>
    </cofactor>
    <text evidence="1">Binds 2 zinc ions per subunit.</text>
</comment>
<comment type="pathway">
    <text evidence="1">Amino-acid degradation; L-tryptophan degradation via kynurenine pathway; L-kynurenine from L-tryptophan: step 2/2.</text>
</comment>
<comment type="subunit">
    <text evidence="1">Homodimer.</text>
</comment>
<comment type="similarity">
    <text evidence="1">Belongs to the Cyclase 1 superfamily. KynB family.</text>
</comment>
<gene>
    <name evidence="1" type="primary">kynB</name>
    <name type="ordered locus">Bcen2424_2577</name>
</gene>
<name>KYNB_BURCH</name>
<dbReference type="EC" id="3.5.1.9" evidence="1"/>
<dbReference type="EMBL" id="CP000458">
    <property type="protein sequence ID" value="ABK09327.1"/>
    <property type="molecule type" value="Genomic_DNA"/>
</dbReference>
<dbReference type="RefSeq" id="WP_011546066.1">
    <property type="nucleotide sequence ID" value="NC_008542.1"/>
</dbReference>
<dbReference type="SMR" id="A0KA00"/>
<dbReference type="KEGG" id="bch:Bcen2424_2577"/>
<dbReference type="HOGENOM" id="CLU_030671_3_1_4"/>
<dbReference type="UniPathway" id="UPA00333">
    <property type="reaction ID" value="UER00454"/>
</dbReference>
<dbReference type="GO" id="GO:0004061">
    <property type="term" value="F:arylformamidase activity"/>
    <property type="evidence" value="ECO:0000250"/>
    <property type="project" value="UniProtKB"/>
</dbReference>
<dbReference type="GO" id="GO:0004328">
    <property type="term" value="F:formamidase activity"/>
    <property type="evidence" value="ECO:0007669"/>
    <property type="project" value="InterPro"/>
</dbReference>
<dbReference type="GO" id="GO:0008270">
    <property type="term" value="F:zinc ion binding"/>
    <property type="evidence" value="ECO:0007669"/>
    <property type="project" value="UniProtKB-UniRule"/>
</dbReference>
<dbReference type="GO" id="GO:0043420">
    <property type="term" value="P:anthranilate metabolic process"/>
    <property type="evidence" value="ECO:0000250"/>
    <property type="project" value="UniProtKB"/>
</dbReference>
<dbReference type="GO" id="GO:0019441">
    <property type="term" value="P:L-tryptophan catabolic process to kynurenine"/>
    <property type="evidence" value="ECO:0000250"/>
    <property type="project" value="UniProtKB"/>
</dbReference>
<dbReference type="FunFam" id="3.50.30.50:FF:000001">
    <property type="entry name" value="Kynurenine formamidase"/>
    <property type="match status" value="1"/>
</dbReference>
<dbReference type="Gene3D" id="3.50.30.50">
    <property type="entry name" value="Putative cyclase"/>
    <property type="match status" value="1"/>
</dbReference>
<dbReference type="HAMAP" id="MF_01969">
    <property type="entry name" value="KynB"/>
    <property type="match status" value="1"/>
</dbReference>
<dbReference type="InterPro" id="IPR007325">
    <property type="entry name" value="KFase/CYL"/>
</dbReference>
<dbReference type="InterPro" id="IPR037175">
    <property type="entry name" value="KFase_sf"/>
</dbReference>
<dbReference type="InterPro" id="IPR017484">
    <property type="entry name" value="Kynurenine_formamidase_bac"/>
</dbReference>
<dbReference type="NCBIfam" id="TIGR03035">
    <property type="entry name" value="trp_arylform"/>
    <property type="match status" value="1"/>
</dbReference>
<dbReference type="PANTHER" id="PTHR31118">
    <property type="entry name" value="CYCLASE-LIKE PROTEIN 2"/>
    <property type="match status" value="1"/>
</dbReference>
<dbReference type="PANTHER" id="PTHR31118:SF32">
    <property type="entry name" value="KYNURENINE FORMAMIDASE"/>
    <property type="match status" value="1"/>
</dbReference>
<dbReference type="Pfam" id="PF04199">
    <property type="entry name" value="Cyclase"/>
    <property type="match status" value="1"/>
</dbReference>
<dbReference type="SUPFAM" id="SSF102198">
    <property type="entry name" value="Putative cyclase"/>
    <property type="match status" value="1"/>
</dbReference>
<proteinExistence type="inferred from homology"/>
<keyword id="KW-0378">Hydrolase</keyword>
<keyword id="KW-0479">Metal-binding</keyword>
<keyword id="KW-0823">Tryptophan catabolism</keyword>
<keyword id="KW-0862">Zinc</keyword>
<feature type="chain" id="PRO_0000362102" description="Kynurenine formamidase">
    <location>
        <begin position="1"/>
        <end position="213"/>
    </location>
</feature>
<feature type="active site" description="Proton donor/acceptor" evidence="1">
    <location>
        <position position="58"/>
    </location>
</feature>
<feature type="binding site" evidence="1">
    <location>
        <position position="18"/>
    </location>
    <ligand>
        <name>substrate</name>
    </ligand>
</feature>
<feature type="binding site" evidence="1">
    <location>
        <position position="48"/>
    </location>
    <ligand>
        <name>Zn(2+)</name>
        <dbReference type="ChEBI" id="CHEBI:29105"/>
        <label>1</label>
    </ligand>
</feature>
<feature type="binding site" evidence="1">
    <location>
        <position position="52"/>
    </location>
    <ligand>
        <name>Zn(2+)</name>
        <dbReference type="ChEBI" id="CHEBI:29105"/>
        <label>1</label>
    </ligand>
</feature>
<feature type="binding site" evidence="1">
    <location>
        <position position="54"/>
    </location>
    <ligand>
        <name>Zn(2+)</name>
        <dbReference type="ChEBI" id="CHEBI:29105"/>
        <label>1</label>
    </ligand>
</feature>
<feature type="binding site" evidence="1">
    <location>
        <position position="54"/>
    </location>
    <ligand>
        <name>Zn(2+)</name>
        <dbReference type="ChEBI" id="CHEBI:29105"/>
        <label>2</label>
    </ligand>
</feature>
<feature type="binding site" evidence="1">
    <location>
        <position position="160"/>
    </location>
    <ligand>
        <name>Zn(2+)</name>
        <dbReference type="ChEBI" id="CHEBI:29105"/>
        <label>2</label>
    </ligand>
</feature>
<feature type="binding site" evidence="1">
    <location>
        <position position="172"/>
    </location>
    <ligand>
        <name>Zn(2+)</name>
        <dbReference type="ChEBI" id="CHEBI:29105"/>
        <label>1</label>
    </ligand>
</feature>
<feature type="binding site" evidence="1">
    <location>
        <position position="172"/>
    </location>
    <ligand>
        <name>Zn(2+)</name>
        <dbReference type="ChEBI" id="CHEBI:29105"/>
        <label>2</label>
    </ligand>
</feature>
<evidence type="ECO:0000255" key="1">
    <source>
        <dbReference type="HAMAP-Rule" id="MF_01969"/>
    </source>
</evidence>
<reference key="1">
    <citation type="submission" date="2006-08" db="EMBL/GenBank/DDBJ databases">
        <title>Complete sequence of chromosome 1 of Burkholderia cenocepacia HI2424.</title>
        <authorList>
            <person name="Copeland A."/>
            <person name="Lucas S."/>
            <person name="Lapidus A."/>
            <person name="Barry K."/>
            <person name="Detter J.C."/>
            <person name="Glavina del Rio T."/>
            <person name="Hammon N."/>
            <person name="Israni S."/>
            <person name="Pitluck S."/>
            <person name="Chain P."/>
            <person name="Malfatti S."/>
            <person name="Shin M."/>
            <person name="Vergez L."/>
            <person name="Schmutz J."/>
            <person name="Larimer F."/>
            <person name="Land M."/>
            <person name="Hauser L."/>
            <person name="Kyrpides N."/>
            <person name="Kim E."/>
            <person name="LiPuma J.J."/>
            <person name="Gonzalez C.F."/>
            <person name="Konstantinidis K."/>
            <person name="Tiedje J.M."/>
            <person name="Richardson P."/>
        </authorList>
    </citation>
    <scope>NUCLEOTIDE SEQUENCE [LARGE SCALE GENOMIC DNA]</scope>
    <source>
        <strain>HI2424</strain>
    </source>
</reference>
<organism>
    <name type="scientific">Burkholderia cenocepacia (strain HI2424)</name>
    <dbReference type="NCBI Taxonomy" id="331272"/>
    <lineage>
        <taxon>Bacteria</taxon>
        <taxon>Pseudomonadati</taxon>
        <taxon>Pseudomonadota</taxon>
        <taxon>Betaproteobacteria</taxon>
        <taxon>Burkholderiales</taxon>
        <taxon>Burkholderiaceae</taxon>
        <taxon>Burkholderia</taxon>
        <taxon>Burkholderia cepacia complex</taxon>
    </lineage>
</organism>
<accession>A0KA00</accession>
<protein>
    <recommendedName>
        <fullName evidence="1">Kynurenine formamidase</fullName>
        <shortName evidence="1">KFA</shortName>
        <shortName evidence="1">KFase</shortName>
        <ecNumber evidence="1">3.5.1.9</ecNumber>
    </recommendedName>
    <alternativeName>
        <fullName evidence="1">Arylformamidase</fullName>
    </alternativeName>
    <alternativeName>
        <fullName evidence="1">N-formylkynurenine formamidase</fullName>
        <shortName evidence="1">FKF</shortName>
    </alternativeName>
</protein>